<dbReference type="EMBL" id="U70779">
    <property type="protein sequence ID" value="AAB47748.1"/>
    <property type="molecule type" value="mRNA"/>
</dbReference>
<dbReference type="RefSeq" id="NP_075226.1">
    <property type="nucleotide sequence ID" value="NM_022937.3"/>
</dbReference>
<dbReference type="RefSeq" id="XP_006230397.1">
    <property type="nucleotide sequence ID" value="XM_006230335.5"/>
</dbReference>
<dbReference type="RefSeq" id="XP_006230398.1">
    <property type="nucleotide sequence ID" value="XM_006230336.3"/>
</dbReference>
<dbReference type="RefSeq" id="XP_006230399.1">
    <property type="nucleotide sequence ID" value="XM_006230337.5"/>
</dbReference>
<dbReference type="RefSeq" id="XP_006230401.1">
    <property type="nucleotide sequence ID" value="XM_006230339.5"/>
</dbReference>
<dbReference type="RefSeq" id="XP_006230402.1">
    <property type="nucleotide sequence ID" value="XM_006230340.3"/>
</dbReference>
<dbReference type="RefSeq" id="XP_006230403.1">
    <property type="nucleotide sequence ID" value="XM_006230341.3"/>
</dbReference>
<dbReference type="RefSeq" id="XP_008758140.1">
    <property type="nucleotide sequence ID" value="XM_008759918.2"/>
</dbReference>
<dbReference type="RefSeq" id="XP_017445177.1">
    <property type="nucleotide sequence ID" value="XM_017589688.1"/>
</dbReference>
<dbReference type="RefSeq" id="XP_017445178.1">
    <property type="nucleotide sequence ID" value="XM_017589689.1"/>
</dbReference>
<dbReference type="RefSeq" id="XP_038945730.1">
    <property type="nucleotide sequence ID" value="XM_039089802.2"/>
</dbReference>
<dbReference type="RefSeq" id="XP_063128921.1">
    <property type="nucleotide sequence ID" value="XM_063272851.1"/>
</dbReference>
<dbReference type="SMR" id="P70611"/>
<dbReference type="FunCoup" id="P70611">
    <property type="interactions" value="773"/>
</dbReference>
<dbReference type="STRING" id="10116.ENSRNOP00000027022"/>
<dbReference type="iPTMnet" id="P70611"/>
<dbReference type="PhosphoSitePlus" id="P70611"/>
<dbReference type="PaxDb" id="10116-ENSRNOP00000027022"/>
<dbReference type="Ensembl" id="ENSRNOT00000027022.5">
    <property type="protein sequence ID" value="ENSRNOP00000027022.1"/>
    <property type="gene ID" value="ENSRNOG00000019920.5"/>
</dbReference>
<dbReference type="GeneID" id="65031"/>
<dbReference type="KEGG" id="rno:65031"/>
<dbReference type="UCSC" id="RGD:620518">
    <property type="organism name" value="rat"/>
</dbReference>
<dbReference type="AGR" id="RGD:620518"/>
<dbReference type="CTD" id="8448"/>
<dbReference type="RGD" id="620518">
    <property type="gene designation" value="Doc2a"/>
</dbReference>
<dbReference type="eggNOG" id="KOG1013">
    <property type="taxonomic scope" value="Eukaryota"/>
</dbReference>
<dbReference type="GeneTree" id="ENSGT00940000159141"/>
<dbReference type="HOGENOM" id="CLU_023008_3_0_1"/>
<dbReference type="InParanoid" id="P70611"/>
<dbReference type="OMA" id="WEMEQQR"/>
<dbReference type="OrthoDB" id="270970at2759"/>
<dbReference type="PhylomeDB" id="P70611"/>
<dbReference type="TreeFam" id="TF351844"/>
<dbReference type="PRO" id="PR:P70611"/>
<dbReference type="Proteomes" id="UP000002494">
    <property type="component" value="Chromosome 1"/>
</dbReference>
<dbReference type="Bgee" id="ENSRNOG00000019920">
    <property type="expression patterns" value="Expressed in frontal cortex and 14 other cell types or tissues"/>
</dbReference>
<dbReference type="GO" id="GO:0098850">
    <property type="term" value="C:extrinsic component of synaptic vesicle membrane"/>
    <property type="evidence" value="ECO:0000314"/>
    <property type="project" value="SynGO"/>
</dbReference>
<dbReference type="GO" id="GO:0098978">
    <property type="term" value="C:glutamatergic synapse"/>
    <property type="evidence" value="ECO:0000314"/>
    <property type="project" value="SynGO"/>
</dbReference>
<dbReference type="GO" id="GO:0005764">
    <property type="term" value="C:lysosome"/>
    <property type="evidence" value="ECO:0000314"/>
    <property type="project" value="UniProtKB"/>
</dbReference>
<dbReference type="GO" id="GO:0043005">
    <property type="term" value="C:neuron projection"/>
    <property type="evidence" value="ECO:0007669"/>
    <property type="project" value="UniProtKB-KW"/>
</dbReference>
<dbReference type="GO" id="GO:0045202">
    <property type="term" value="C:synapse"/>
    <property type="evidence" value="ECO:0000318"/>
    <property type="project" value="GO_Central"/>
</dbReference>
<dbReference type="GO" id="GO:0005544">
    <property type="term" value="F:calcium-dependent phospholipid binding"/>
    <property type="evidence" value="ECO:0007669"/>
    <property type="project" value="UniProtKB-KW"/>
</dbReference>
<dbReference type="GO" id="GO:0046872">
    <property type="term" value="F:metal ion binding"/>
    <property type="evidence" value="ECO:0007669"/>
    <property type="project" value="UniProtKB-KW"/>
</dbReference>
<dbReference type="GO" id="GO:0099502">
    <property type="term" value="P:calcium-dependent activation of synaptic vesicle fusion"/>
    <property type="evidence" value="ECO:0000314"/>
    <property type="project" value="SynGO"/>
</dbReference>
<dbReference type="GO" id="GO:0045956">
    <property type="term" value="P:positive regulation of calcium ion-dependent exocytosis"/>
    <property type="evidence" value="ECO:0000318"/>
    <property type="project" value="GO_Central"/>
</dbReference>
<dbReference type="GO" id="GO:0017158">
    <property type="term" value="P:regulation of calcium ion-dependent exocytosis"/>
    <property type="evidence" value="ECO:0000266"/>
    <property type="project" value="RGD"/>
</dbReference>
<dbReference type="GO" id="GO:0061669">
    <property type="term" value="P:spontaneous neurotransmitter secretion"/>
    <property type="evidence" value="ECO:0000266"/>
    <property type="project" value="RGD"/>
</dbReference>
<dbReference type="GO" id="GO:0016079">
    <property type="term" value="P:synaptic vesicle exocytosis"/>
    <property type="evidence" value="ECO:0000270"/>
    <property type="project" value="RGD"/>
</dbReference>
<dbReference type="CDD" id="cd04035">
    <property type="entry name" value="C2A_Rabphilin_Doc2"/>
    <property type="match status" value="1"/>
</dbReference>
<dbReference type="CDD" id="cd08384">
    <property type="entry name" value="C2B_Rabphilin_Doc2"/>
    <property type="match status" value="1"/>
</dbReference>
<dbReference type="FunFam" id="2.60.40.150:FF:000032">
    <property type="entry name" value="Double c2-like domain-containing"/>
    <property type="match status" value="1"/>
</dbReference>
<dbReference type="FunFam" id="2.60.40.150:FF:000023">
    <property type="entry name" value="Double C2-like domain-containing protein"/>
    <property type="match status" value="1"/>
</dbReference>
<dbReference type="Gene3D" id="2.60.40.150">
    <property type="entry name" value="C2 domain"/>
    <property type="match status" value="2"/>
</dbReference>
<dbReference type="InterPro" id="IPR000008">
    <property type="entry name" value="C2_dom"/>
</dbReference>
<dbReference type="InterPro" id="IPR035892">
    <property type="entry name" value="C2_domain_sf"/>
</dbReference>
<dbReference type="InterPro" id="IPR014638">
    <property type="entry name" value="Doc2"/>
</dbReference>
<dbReference type="InterPro" id="IPR043566">
    <property type="entry name" value="Rabphilin/DOC2/Noc2"/>
</dbReference>
<dbReference type="InterPro" id="IPR047022">
    <property type="entry name" value="Rabphilin_Doc2_C2A"/>
</dbReference>
<dbReference type="InterPro" id="IPR001565">
    <property type="entry name" value="Synaptotagmin"/>
</dbReference>
<dbReference type="PANTHER" id="PTHR45729:SF1">
    <property type="entry name" value="DOUBLE C2-LIKE DOMAIN-CONTAINING PROTEIN ALPHA"/>
    <property type="match status" value="1"/>
</dbReference>
<dbReference type="PANTHER" id="PTHR45729">
    <property type="entry name" value="RABPHILIN, ISOFORM A"/>
    <property type="match status" value="1"/>
</dbReference>
<dbReference type="Pfam" id="PF00168">
    <property type="entry name" value="C2"/>
    <property type="match status" value="2"/>
</dbReference>
<dbReference type="PIRSF" id="PIRSF036931">
    <property type="entry name" value="Doc2"/>
    <property type="match status" value="1"/>
</dbReference>
<dbReference type="PRINTS" id="PR00360">
    <property type="entry name" value="C2DOMAIN"/>
</dbReference>
<dbReference type="PRINTS" id="PR00399">
    <property type="entry name" value="SYNAPTOTAGMN"/>
</dbReference>
<dbReference type="SMART" id="SM00239">
    <property type="entry name" value="C2"/>
    <property type="match status" value="2"/>
</dbReference>
<dbReference type="SUPFAM" id="SSF49562">
    <property type="entry name" value="C2 domain (Calcium/lipid-binding domain, CaLB)"/>
    <property type="match status" value="2"/>
</dbReference>
<dbReference type="PROSITE" id="PS50004">
    <property type="entry name" value="C2"/>
    <property type="match status" value="2"/>
</dbReference>
<accession>P70611</accession>
<name>DOC2A_RAT</name>
<comment type="function">
    <text evidence="1">Calcium sensor which most probably regulates fusion of vesicles with membranes. Binds calcium and phospholipids. May be involved in calcium dependent neurotransmitter release through the interaction with UNC13A. May be involved in calcium-dependent spontaneous release of neurotransmitter in absence of action potentials in neuronal cells. Regulates Ca(2+)-dependent secretory lysosome exocytosis in mast cells (By similarity).</text>
</comment>
<comment type="cofactor">
    <cofactor evidence="2">
        <name>Ca(2+)</name>
        <dbReference type="ChEBI" id="CHEBI:29108"/>
    </cofactor>
</comment>
<comment type="subunit">
    <text evidence="1">Interacts (via N-terminus) with UNC13A. Interacts with cytoplasmic dynein light chain DYNLT1. Interacts with UNC13D (By similarity).</text>
</comment>
<comment type="subcellular location">
    <subcellularLocation>
        <location evidence="1">Cytoplasmic vesicle</location>
        <location evidence="1">Secretory vesicle</location>
        <location evidence="1">Synaptic vesicle membrane</location>
        <topology evidence="1">Peripheral membrane protein</topology>
    </subcellularLocation>
    <subcellularLocation>
        <location evidence="1">Synapse</location>
        <location evidence="1">Synaptosome</location>
    </subcellularLocation>
    <subcellularLocation>
        <location evidence="3">Lysosome</location>
    </subcellularLocation>
</comment>
<comment type="tissue specificity">
    <text evidence="3 4">Predominantly expressed in brain. Also found in non-neural tissues. Expressed in RBL-2H3 mast cell line.</text>
</comment>
<comment type="domain">
    <text evidence="1">C2 domain 1 is involved in binding calcium and phospholipids.</text>
</comment>
<evidence type="ECO:0000250" key="1"/>
<evidence type="ECO:0000255" key="2">
    <source>
        <dbReference type="PROSITE-ProRule" id="PRU00041"/>
    </source>
</evidence>
<evidence type="ECO:0000269" key="3">
    <source>
    </source>
</evidence>
<evidence type="ECO:0000269" key="4">
    <source>
    </source>
</evidence>
<protein>
    <recommendedName>
        <fullName>Double C2-like domain-containing protein alpha</fullName>
        <shortName>Doc2-alpha</shortName>
    </recommendedName>
</protein>
<keyword id="KW-0106">Calcium</keyword>
<keyword id="KW-0111">Calcium/phospholipid-binding</keyword>
<keyword id="KW-0968">Cytoplasmic vesicle</keyword>
<keyword id="KW-0268">Exocytosis</keyword>
<keyword id="KW-0458">Lysosome</keyword>
<keyword id="KW-0472">Membrane</keyword>
<keyword id="KW-0479">Metal-binding</keyword>
<keyword id="KW-1185">Reference proteome</keyword>
<keyword id="KW-0677">Repeat</keyword>
<keyword id="KW-0770">Synapse</keyword>
<keyword id="KW-0771">Synaptosome</keyword>
<feature type="chain" id="PRO_0000079967" description="Double C2-like domain-containing protein alpha">
    <location>
        <begin position="1"/>
        <end position="403"/>
    </location>
</feature>
<feature type="domain" description="C2 1" evidence="2">
    <location>
        <begin position="92"/>
        <end position="214"/>
    </location>
</feature>
<feature type="domain" description="C2 2" evidence="2">
    <location>
        <begin position="254"/>
        <end position="387"/>
    </location>
</feature>
<feature type="region of interest" description="Interaction with UNC13D and DYNLT1" evidence="1">
    <location>
        <begin position="1"/>
        <end position="92"/>
    </location>
</feature>
<feature type="region of interest" description="Interaction with UNC13D" evidence="1">
    <location>
        <begin position="218"/>
        <end position="403"/>
    </location>
</feature>
<feature type="binding site" evidence="2">
    <location>
        <position position="123"/>
    </location>
    <ligand>
        <name>Ca(2+)</name>
        <dbReference type="ChEBI" id="CHEBI:29108"/>
        <label>1</label>
    </ligand>
</feature>
<feature type="binding site" evidence="2">
    <location>
        <position position="129"/>
    </location>
    <ligand>
        <name>Ca(2+)</name>
        <dbReference type="ChEBI" id="CHEBI:29108"/>
        <label>1</label>
    </ligand>
</feature>
<feature type="binding site" evidence="2">
    <location>
        <position position="184"/>
    </location>
    <ligand>
        <name>Ca(2+)</name>
        <dbReference type="ChEBI" id="CHEBI:29108"/>
        <label>1</label>
    </ligand>
</feature>
<feature type="binding site" evidence="2">
    <location>
        <position position="186"/>
    </location>
    <ligand>
        <name>Ca(2+)</name>
        <dbReference type="ChEBI" id="CHEBI:29108"/>
        <label>1</label>
    </ligand>
</feature>
<feature type="binding site" evidence="2">
    <location>
        <position position="285"/>
    </location>
    <ligand>
        <name>Ca(2+)</name>
        <dbReference type="ChEBI" id="CHEBI:29108"/>
        <label>2</label>
    </ligand>
</feature>
<feature type="binding site" evidence="2">
    <location>
        <position position="285"/>
    </location>
    <ligand>
        <name>Ca(2+)</name>
        <dbReference type="ChEBI" id="CHEBI:29108"/>
        <label>3</label>
    </ligand>
</feature>
<feature type="binding site" evidence="2">
    <location>
        <position position="291"/>
    </location>
    <ligand>
        <name>Ca(2+)</name>
        <dbReference type="ChEBI" id="CHEBI:29108"/>
        <label>2</label>
    </ligand>
</feature>
<feature type="binding site" evidence="2">
    <location>
        <position position="345"/>
    </location>
    <ligand>
        <name>Ca(2+)</name>
        <dbReference type="ChEBI" id="CHEBI:29108"/>
        <label>2</label>
    </ligand>
</feature>
<feature type="binding site" evidence="2">
    <location>
        <position position="345"/>
    </location>
    <ligand>
        <name>Ca(2+)</name>
        <dbReference type="ChEBI" id="CHEBI:29108"/>
        <label>3</label>
    </ligand>
</feature>
<feature type="binding site" evidence="2">
    <location>
        <position position="347"/>
    </location>
    <ligand>
        <name>Ca(2+)</name>
        <dbReference type="ChEBI" id="CHEBI:29108"/>
        <label>2</label>
    </ligand>
</feature>
<feature type="binding site" evidence="2">
    <location>
        <position position="347"/>
    </location>
    <ligand>
        <name>Ca(2+)</name>
        <dbReference type="ChEBI" id="CHEBI:29108"/>
        <label>3</label>
    </ligand>
</feature>
<feature type="binding site" evidence="2">
    <location>
        <position position="353"/>
    </location>
    <ligand>
        <name>Ca(2+)</name>
        <dbReference type="ChEBI" id="CHEBI:29108"/>
        <label>3</label>
    </ligand>
</feature>
<sequence>MRGRRGDRMTINIQEHMAINVCPGPIRPIRQISDYFPRRGPGPEGGGGGRGFGEAPAHLAPLALAPPAALLGATTPDDGAEVDSYDSDDTTALGTLEFDLLYDQASCMLHCRILRAKGLKPMDFNGLADPYVKLHLLPGACKANKLKTKTQRNTLNPVWNEELTYSGITDDDITHKVLRISVCDEDKLSHNEFIGEIRVPLRRLKPSQKKHFNICLERQVPLPSPSSMSAALRGISCYLKELEQAEQGPGLLEERGRILLSLSYSSRRHGLLVGIVRCAHLAAMDVNGYSDPYVKTYLRPDVDKKSKHKTCVKKKTLNPEFNEEFFYEMELSTLATKTLEVTVWDYDIGKSNDFIGGVSLGPGARGEAQKHWRDCLHQPDTAVERWHTLTSELPPAAGALPLA</sequence>
<organism>
    <name type="scientific">Rattus norvegicus</name>
    <name type="common">Rat</name>
    <dbReference type="NCBI Taxonomy" id="10116"/>
    <lineage>
        <taxon>Eukaryota</taxon>
        <taxon>Metazoa</taxon>
        <taxon>Chordata</taxon>
        <taxon>Craniata</taxon>
        <taxon>Vertebrata</taxon>
        <taxon>Euteleostomi</taxon>
        <taxon>Mammalia</taxon>
        <taxon>Eutheria</taxon>
        <taxon>Euarchontoglires</taxon>
        <taxon>Glires</taxon>
        <taxon>Rodentia</taxon>
        <taxon>Myomorpha</taxon>
        <taxon>Muroidea</taxon>
        <taxon>Muridae</taxon>
        <taxon>Murinae</taxon>
        <taxon>Rattus</taxon>
    </lineage>
</organism>
<proteinExistence type="evidence at protein level"/>
<gene>
    <name type="primary">Doc2a</name>
</gene>
<reference key="1">
    <citation type="journal article" date="1997" name="Neuron">
        <title>DOC2 proteins in rat brain: complementary distribution and proposed function as vesicular adapter proteins in early stages of secretion.</title>
        <authorList>
            <person name="Verhage M."/>
            <person name="de Vries K.J."/>
            <person name="Roeshol H."/>
            <person name="Burbach J.P."/>
            <person name="Gispen W.H."/>
            <person name="Suedhof T.C."/>
        </authorList>
    </citation>
    <scope>NUCLEOTIDE SEQUENCE [MRNA]</scope>
    <scope>TISSUE SPECIFICITY</scope>
</reference>
<reference key="2">
    <citation type="journal article" date="1998" name="J. Biol. Chem.">
        <title>Interaction of Doc2 with tctex-1, a light chain of cytoplasmic dynein. Implication in dynein-dependent vesicle transport.</title>
        <authorList>
            <person name="Nagano F."/>
            <person name="Orita S."/>
            <person name="Sasaki T."/>
            <person name="Naito A."/>
            <person name="Sakaguchi G."/>
            <person name="Maeda M."/>
            <person name="Watanabe T."/>
            <person name="Kominami E."/>
            <person name="Uchiyama Y."/>
            <person name="Takai Y."/>
        </authorList>
    </citation>
    <scope>INTERACTION WITH DYNLT1</scope>
    <source>
        <strain>Sprague-Dawley</strain>
        <tissue>Brain</tissue>
    </source>
</reference>
<reference key="3">
    <citation type="journal article" date="2008" name="J. Immunol.">
        <title>Doc2 alpha and Munc13-4 regulate Ca(2+) -dependent secretory lysosome exocytosis in mast cells.</title>
        <authorList>
            <person name="Higashio H."/>
            <person name="Nishimura N."/>
            <person name="Ishizaki H."/>
            <person name="Miyoshi J."/>
            <person name="Orita S."/>
            <person name="Sakane A."/>
            <person name="Sasaki T."/>
        </authorList>
    </citation>
    <scope>SUBCELLULAR LOCATION</scope>
    <scope>TISSUE SPECIFICITY</scope>
</reference>